<gene>
    <name evidence="1" type="primary">ybhG</name>
    <name type="ordered locus">SEN0764</name>
</gene>
<name>YBHG_SALEP</name>
<sequence>MKKPVVIGLAIAAIVAVIAGGTWWYQSRQDDGLTLYGNVDIRTVNISFRVGGRLASLNVDEGDTIKAGQVLGELDHAPYENALMQAKAGVSVAQAQYDLMLAGYRDEEIAQAAAAVRQAQAAYDYAQNFYNRQQGLWKSRTISANDLENARSSRDQAQATLKSAQDKLSQYRTGNREQDIAQAKASLEQAKAQLAQAQLDLQDTTLIAPANGTLLTRAVEPGSMLNAGSTVLTLSLTRPVWVRAYVDERNLSQTQPGRDILLYTDGRPDKPYHGKIGFVSPTAEFTPKTVETPDLRTDLVYRLRIIVTDADDALRQGMPVTVKFNDEARHE</sequence>
<evidence type="ECO:0000255" key="1">
    <source>
        <dbReference type="HAMAP-Rule" id="MF_01304"/>
    </source>
</evidence>
<organism>
    <name type="scientific">Salmonella enteritidis PT4 (strain P125109)</name>
    <dbReference type="NCBI Taxonomy" id="550537"/>
    <lineage>
        <taxon>Bacteria</taxon>
        <taxon>Pseudomonadati</taxon>
        <taxon>Pseudomonadota</taxon>
        <taxon>Gammaproteobacteria</taxon>
        <taxon>Enterobacterales</taxon>
        <taxon>Enterobacteriaceae</taxon>
        <taxon>Salmonella</taxon>
    </lineage>
</organism>
<reference key="1">
    <citation type="journal article" date="2008" name="Genome Res.">
        <title>Comparative genome analysis of Salmonella enteritidis PT4 and Salmonella gallinarum 287/91 provides insights into evolutionary and host adaptation pathways.</title>
        <authorList>
            <person name="Thomson N.R."/>
            <person name="Clayton D.J."/>
            <person name="Windhorst D."/>
            <person name="Vernikos G."/>
            <person name="Davidson S."/>
            <person name="Churcher C."/>
            <person name="Quail M.A."/>
            <person name="Stevens M."/>
            <person name="Jones M.A."/>
            <person name="Watson M."/>
            <person name="Barron A."/>
            <person name="Layton A."/>
            <person name="Pickard D."/>
            <person name="Kingsley R.A."/>
            <person name="Bignell A."/>
            <person name="Clark L."/>
            <person name="Harris B."/>
            <person name="Ormond D."/>
            <person name="Abdellah Z."/>
            <person name="Brooks K."/>
            <person name="Cherevach I."/>
            <person name="Chillingworth T."/>
            <person name="Woodward J."/>
            <person name="Norberczak H."/>
            <person name="Lord A."/>
            <person name="Arrowsmith C."/>
            <person name="Jagels K."/>
            <person name="Moule S."/>
            <person name="Mungall K."/>
            <person name="Saunders M."/>
            <person name="Whitehead S."/>
            <person name="Chabalgoity J.A."/>
            <person name="Maskell D."/>
            <person name="Humphreys T."/>
            <person name="Roberts M."/>
            <person name="Barrow P.A."/>
            <person name="Dougan G."/>
            <person name="Parkhill J."/>
        </authorList>
    </citation>
    <scope>NUCLEOTIDE SEQUENCE [LARGE SCALE GENOMIC DNA]</scope>
    <source>
        <strain>P125109</strain>
    </source>
</reference>
<keyword id="KW-0175">Coiled coil</keyword>
<keyword id="KW-0574">Periplasm</keyword>
<keyword id="KW-0732">Signal</keyword>
<dbReference type="EMBL" id="AM933172">
    <property type="protein sequence ID" value="CAR32349.1"/>
    <property type="molecule type" value="Genomic_DNA"/>
</dbReference>
<dbReference type="SMR" id="B5QXS4"/>
<dbReference type="KEGG" id="set:SEN0764"/>
<dbReference type="HOGENOM" id="CLU_018816_6_3_6"/>
<dbReference type="Proteomes" id="UP000000613">
    <property type="component" value="Chromosome"/>
</dbReference>
<dbReference type="GO" id="GO:0042597">
    <property type="term" value="C:periplasmic space"/>
    <property type="evidence" value="ECO:0007669"/>
    <property type="project" value="UniProtKB-SubCell"/>
</dbReference>
<dbReference type="FunFam" id="1.10.287.470:FF:000004">
    <property type="entry name" value="UPF0194 membrane protein YbhG"/>
    <property type="match status" value="1"/>
</dbReference>
<dbReference type="FunFam" id="2.40.50.100:FF:000025">
    <property type="entry name" value="UPF0194 membrane protein YbhG"/>
    <property type="match status" value="1"/>
</dbReference>
<dbReference type="Gene3D" id="2.40.30.170">
    <property type="match status" value="1"/>
</dbReference>
<dbReference type="Gene3D" id="2.40.50.100">
    <property type="match status" value="2"/>
</dbReference>
<dbReference type="Gene3D" id="1.10.287.470">
    <property type="entry name" value="Helix hairpin bin"/>
    <property type="match status" value="1"/>
</dbReference>
<dbReference type="HAMAP" id="MF_01304">
    <property type="entry name" value="UPF0194"/>
    <property type="match status" value="1"/>
</dbReference>
<dbReference type="InterPro" id="IPR032317">
    <property type="entry name" value="CusB_D23"/>
</dbReference>
<dbReference type="InterPro" id="IPR022936">
    <property type="entry name" value="UPF0194_membrane_YbhG"/>
</dbReference>
<dbReference type="InterPro" id="IPR050465">
    <property type="entry name" value="UPF0194_transport"/>
</dbReference>
<dbReference type="NCBIfam" id="NF002939">
    <property type="entry name" value="PRK03598.1"/>
    <property type="match status" value="1"/>
</dbReference>
<dbReference type="PANTHER" id="PTHR32347">
    <property type="entry name" value="EFFLUX SYSTEM COMPONENT YKNX-RELATED"/>
    <property type="match status" value="1"/>
</dbReference>
<dbReference type="PANTHER" id="PTHR32347:SF29">
    <property type="entry name" value="UPF0194 MEMBRANE PROTEIN YBHG"/>
    <property type="match status" value="1"/>
</dbReference>
<dbReference type="Pfam" id="PF16576">
    <property type="entry name" value="HlyD_D23"/>
    <property type="match status" value="1"/>
</dbReference>
<dbReference type="SUPFAM" id="SSF111369">
    <property type="entry name" value="HlyD-like secretion proteins"/>
    <property type="match status" value="3"/>
</dbReference>
<proteinExistence type="inferred from homology"/>
<accession>B5QXS4</accession>
<comment type="subcellular location">
    <subcellularLocation>
        <location evidence="1">Periplasm</location>
    </subcellularLocation>
</comment>
<comment type="similarity">
    <text evidence="1">Belongs to the UPF0194 family.</text>
</comment>
<feature type="signal peptide" evidence="1">
    <location>
        <begin position="1"/>
        <end position="19"/>
    </location>
</feature>
<feature type="chain" id="PRO_5000397410" description="UPF0194 membrane protein YbhG">
    <location>
        <begin position="20"/>
        <end position="331"/>
    </location>
</feature>
<feature type="coiled-coil region" evidence="1">
    <location>
        <begin position="107"/>
        <end position="208"/>
    </location>
</feature>
<protein>
    <recommendedName>
        <fullName evidence="1">UPF0194 membrane protein YbhG</fullName>
    </recommendedName>
</protein>